<sequence>MSLTELDDGLVRRMAMGAVFSDFGGKIHSVGFHRTDDLLVTSSEDDSLRLFDIANAKQLKITYHKKHGTDRVCFTHHPSSLICSSRYNLESTGESLRYLSMYDNRILRYFKGHKDRVVSLCMSPINDSFMSGSLDRSVRLWDLRVNACQGILHLRGRPAVAYDQQGLVFAIAMEGGAVKLFDSRCYDKGPFDTFLVGGDTAEVNDIKFSNDGKSMLLTTTNNNIYVLDAYRGEKKCGFSLEPSQGTPIEATFTPDGKYVLSGSGDGTLHAWNIENPSEVARWENNIGVVSCLKWAPRRAMFVAASTVLTFWIPNDGESPAPADPPTDQQQ</sequence>
<reference key="1">
    <citation type="journal article" date="2000" name="Nature">
        <title>Sequence and analysis of chromosome 5 of the plant Arabidopsis thaliana.</title>
        <authorList>
            <person name="Tabata S."/>
            <person name="Kaneko T."/>
            <person name="Nakamura Y."/>
            <person name="Kotani H."/>
            <person name="Kato T."/>
            <person name="Asamizu E."/>
            <person name="Miyajima N."/>
            <person name="Sasamoto S."/>
            <person name="Kimura T."/>
            <person name="Hosouchi T."/>
            <person name="Kawashima K."/>
            <person name="Kohara M."/>
            <person name="Matsumoto M."/>
            <person name="Matsuno A."/>
            <person name="Muraki A."/>
            <person name="Nakayama S."/>
            <person name="Nakazaki N."/>
            <person name="Naruo K."/>
            <person name="Okumura S."/>
            <person name="Shinpo S."/>
            <person name="Takeuchi C."/>
            <person name="Wada T."/>
            <person name="Watanabe A."/>
            <person name="Yamada M."/>
            <person name="Yasuda M."/>
            <person name="Sato S."/>
            <person name="de la Bastide M."/>
            <person name="Huang E."/>
            <person name="Spiegel L."/>
            <person name="Gnoj L."/>
            <person name="O'Shaughnessy A."/>
            <person name="Preston R."/>
            <person name="Habermann K."/>
            <person name="Murray J."/>
            <person name="Johnson D."/>
            <person name="Rohlfing T."/>
            <person name="Nelson J."/>
            <person name="Stoneking T."/>
            <person name="Pepin K."/>
            <person name="Spieth J."/>
            <person name="Sekhon M."/>
            <person name="Armstrong J."/>
            <person name="Becker M."/>
            <person name="Belter E."/>
            <person name="Cordum H."/>
            <person name="Cordes M."/>
            <person name="Courtney L."/>
            <person name="Courtney W."/>
            <person name="Dante M."/>
            <person name="Du H."/>
            <person name="Edwards J."/>
            <person name="Fryman J."/>
            <person name="Haakensen B."/>
            <person name="Lamar E."/>
            <person name="Latreille P."/>
            <person name="Leonard S."/>
            <person name="Meyer R."/>
            <person name="Mulvaney E."/>
            <person name="Ozersky P."/>
            <person name="Riley A."/>
            <person name="Strowmatt C."/>
            <person name="Wagner-McPherson C."/>
            <person name="Wollam A."/>
            <person name="Yoakum M."/>
            <person name="Bell M."/>
            <person name="Dedhia N."/>
            <person name="Parnell L."/>
            <person name="Shah R."/>
            <person name="Rodriguez M."/>
            <person name="Hoon See L."/>
            <person name="Vil D."/>
            <person name="Baker J."/>
            <person name="Kirchoff K."/>
            <person name="Toth K."/>
            <person name="King L."/>
            <person name="Bahret A."/>
            <person name="Miller B."/>
            <person name="Marra M.A."/>
            <person name="Martienssen R."/>
            <person name="McCombie W.R."/>
            <person name="Wilson R.K."/>
            <person name="Murphy G."/>
            <person name="Bancroft I."/>
            <person name="Volckaert G."/>
            <person name="Wambutt R."/>
            <person name="Duesterhoeft A."/>
            <person name="Stiekema W."/>
            <person name="Pohl T."/>
            <person name="Entian K.-D."/>
            <person name="Terryn N."/>
            <person name="Hartley N."/>
            <person name="Bent E."/>
            <person name="Johnson S."/>
            <person name="Langham S.-A."/>
            <person name="McCullagh B."/>
            <person name="Robben J."/>
            <person name="Grymonprez B."/>
            <person name="Zimmermann W."/>
            <person name="Ramsperger U."/>
            <person name="Wedler H."/>
            <person name="Balke K."/>
            <person name="Wedler E."/>
            <person name="Peters S."/>
            <person name="van Staveren M."/>
            <person name="Dirkse W."/>
            <person name="Mooijman P."/>
            <person name="Klein Lankhorst R."/>
            <person name="Weitzenegger T."/>
            <person name="Bothe G."/>
            <person name="Rose M."/>
            <person name="Hauf J."/>
            <person name="Berneiser S."/>
            <person name="Hempel S."/>
            <person name="Feldpausch M."/>
            <person name="Lamberth S."/>
            <person name="Villarroel R."/>
            <person name="Gielen J."/>
            <person name="Ardiles W."/>
            <person name="Bents O."/>
            <person name="Lemcke K."/>
            <person name="Kolesov G."/>
            <person name="Mayer K.F.X."/>
            <person name="Rudd S."/>
            <person name="Schoof H."/>
            <person name="Schueller C."/>
            <person name="Zaccaria P."/>
            <person name="Mewes H.-W."/>
            <person name="Bevan M."/>
            <person name="Fransz P.F."/>
        </authorList>
    </citation>
    <scope>NUCLEOTIDE SEQUENCE [LARGE SCALE GENOMIC DNA]</scope>
    <source>
        <strain>cv. Columbia</strain>
    </source>
</reference>
<reference key="2">
    <citation type="journal article" date="2017" name="Plant J.">
        <title>Araport11: a complete reannotation of the Arabidopsis thaliana reference genome.</title>
        <authorList>
            <person name="Cheng C.Y."/>
            <person name="Krishnakumar V."/>
            <person name="Chan A.P."/>
            <person name="Thibaud-Nissen F."/>
            <person name="Schobel S."/>
            <person name="Town C.D."/>
        </authorList>
    </citation>
    <scope>GENOME REANNOTATION</scope>
    <source>
        <strain>cv. Columbia</strain>
    </source>
</reference>
<reference key="3">
    <citation type="submission" date="2006-06" db="EMBL/GenBank/DDBJ databases">
        <title>Arabidopsis ORF clones.</title>
        <authorList>
            <person name="Quinitio C."/>
            <person name="Chen H."/>
            <person name="Kim C.J."/>
            <person name="Shinn P."/>
            <person name="Ecker J.R."/>
        </authorList>
    </citation>
    <scope>NUCLEOTIDE SEQUENCE [LARGE SCALE MRNA]</scope>
    <source>
        <strain>cv. Columbia</strain>
    </source>
</reference>
<reference key="4">
    <citation type="submission" date="2002-03" db="EMBL/GenBank/DDBJ databases">
        <title>Full-length cDNA from Arabidopsis thaliana.</title>
        <authorList>
            <person name="Brover V.V."/>
            <person name="Troukhan M.E."/>
            <person name="Alexandrov N.A."/>
            <person name="Lu Y.-P."/>
            <person name="Flavell R.B."/>
            <person name="Feldmann K.A."/>
        </authorList>
    </citation>
    <scope>NUCLEOTIDE SEQUENCE [LARGE SCALE MRNA]</scope>
</reference>
<reference key="5">
    <citation type="journal article" date="2016" name="Plant Sci.">
        <title>APRF1 promotes flowering under long days in Arabidopsis thaliana.</title>
        <authorList>
            <person name="Kapolas G."/>
            <person name="Beris D."/>
            <person name="Katsareli E."/>
            <person name="Livanos P."/>
            <person name="Zografidis A."/>
            <person name="Roussis A."/>
            <person name="Milioni D."/>
            <person name="Haralampidis K."/>
        </authorList>
    </citation>
    <scope>FUNCTION</scope>
    <scope>DISRUPTION PHENOTYPE</scope>
    <scope>TISSUE SPECIFICITY</scope>
    <scope>DEVELOPMENTAL STAGE</scope>
    <scope>SUBCELLULAR LOCATION</scope>
    <source>
        <strain>cv. Columbia</strain>
    </source>
</reference>
<protein>
    <recommendedName>
        <fullName evidence="4">Protein ANTHESIS POMOTING FACTOR 1</fullName>
    </recommendedName>
</protein>
<evidence type="ECO:0000250" key="1">
    <source>
        <dbReference type="UniProtKB" id="Q9VLN1"/>
    </source>
</evidence>
<evidence type="ECO:0000255" key="2"/>
<evidence type="ECO:0000269" key="3">
    <source>
    </source>
</evidence>
<evidence type="ECO:0000303" key="4">
    <source>
    </source>
</evidence>
<evidence type="ECO:0000305" key="5"/>
<evidence type="ECO:0000312" key="6">
    <source>
        <dbReference type="Araport" id="AT5G14530"/>
    </source>
</evidence>
<evidence type="ECO:0000312" key="7">
    <source>
        <dbReference type="EMBL" id="CAB87620.1"/>
    </source>
</evidence>
<name>APRF1_ARATH</name>
<gene>
    <name evidence="4" type="primary">APRF1</name>
    <name evidence="6" type="ordered locus">At5g14530</name>
    <name evidence="7" type="ORF">T15N1.20</name>
</gene>
<feature type="chain" id="PRO_0000439059" description="Protein ANTHESIS POMOTING FACTOR 1">
    <location>
        <begin position="1"/>
        <end position="330"/>
    </location>
</feature>
<feature type="repeat" description="WD 1" evidence="2">
    <location>
        <begin position="22"/>
        <end position="61"/>
    </location>
</feature>
<feature type="repeat" description="WD 2" evidence="2">
    <location>
        <begin position="112"/>
        <end position="151"/>
    </location>
</feature>
<feature type="repeat" description="WD 3" evidence="2">
    <location>
        <begin position="153"/>
        <end position="191"/>
    </location>
</feature>
<feature type="repeat" description="WD 4" evidence="2">
    <location>
        <begin position="198"/>
        <end position="237"/>
    </location>
</feature>
<feature type="repeat" description="WD 5" evidence="2">
    <location>
        <begin position="242"/>
        <end position="281"/>
    </location>
</feature>
<feature type="repeat" description="WD 6" evidence="2">
    <location>
        <begin position="284"/>
        <end position="323"/>
    </location>
</feature>
<organism>
    <name type="scientific">Arabidopsis thaliana</name>
    <name type="common">Mouse-ear cress</name>
    <dbReference type="NCBI Taxonomy" id="3702"/>
    <lineage>
        <taxon>Eukaryota</taxon>
        <taxon>Viridiplantae</taxon>
        <taxon>Streptophyta</taxon>
        <taxon>Embryophyta</taxon>
        <taxon>Tracheophyta</taxon>
        <taxon>Spermatophyta</taxon>
        <taxon>Magnoliopsida</taxon>
        <taxon>eudicotyledons</taxon>
        <taxon>Gunneridae</taxon>
        <taxon>Pentapetalae</taxon>
        <taxon>rosids</taxon>
        <taxon>malvids</taxon>
        <taxon>Brassicales</taxon>
        <taxon>Brassicaceae</taxon>
        <taxon>Camelineae</taxon>
        <taxon>Arabidopsis</taxon>
    </lineage>
</organism>
<dbReference type="EMBL" id="AL163792">
    <property type="protein sequence ID" value="CAB87620.1"/>
    <property type="molecule type" value="Genomic_DNA"/>
</dbReference>
<dbReference type="EMBL" id="CP002688">
    <property type="protein sequence ID" value="AED92044.1"/>
    <property type="molecule type" value="Genomic_DNA"/>
</dbReference>
<dbReference type="EMBL" id="BT025881">
    <property type="protein sequence ID" value="ABF85783.1"/>
    <property type="molecule type" value="mRNA"/>
</dbReference>
<dbReference type="EMBL" id="AY086271">
    <property type="protein sequence ID" value="AAM64344.1"/>
    <property type="molecule type" value="mRNA"/>
</dbReference>
<dbReference type="PIR" id="T48626">
    <property type="entry name" value="T48626"/>
</dbReference>
<dbReference type="RefSeq" id="NP_196957.1">
    <property type="nucleotide sequence ID" value="NM_121457.3"/>
</dbReference>
<dbReference type="SMR" id="Q9LYK6"/>
<dbReference type="FunCoup" id="Q9LYK6">
    <property type="interactions" value="4599"/>
</dbReference>
<dbReference type="STRING" id="3702.Q9LYK6"/>
<dbReference type="iPTMnet" id="Q9LYK6"/>
<dbReference type="PaxDb" id="3702-AT5G14530.1"/>
<dbReference type="ProteomicsDB" id="244441"/>
<dbReference type="EnsemblPlants" id="AT5G14530.1">
    <property type="protein sequence ID" value="AT5G14530.1"/>
    <property type="gene ID" value="AT5G14530"/>
</dbReference>
<dbReference type="GeneID" id="831304"/>
<dbReference type="Gramene" id="AT5G14530.1">
    <property type="protein sequence ID" value="AT5G14530.1"/>
    <property type="gene ID" value="AT5G14530"/>
</dbReference>
<dbReference type="KEGG" id="ath:AT5G14530"/>
<dbReference type="Araport" id="AT5G14530"/>
<dbReference type="TAIR" id="AT5G14530">
    <property type="gene designation" value="APRF1"/>
</dbReference>
<dbReference type="eggNOG" id="KOG1446">
    <property type="taxonomic scope" value="Eukaryota"/>
</dbReference>
<dbReference type="HOGENOM" id="CLU_044117_1_0_1"/>
<dbReference type="InParanoid" id="Q9LYK6"/>
<dbReference type="OMA" id="HNEGYIR"/>
<dbReference type="OrthoDB" id="27537at2759"/>
<dbReference type="PhylomeDB" id="Q9LYK6"/>
<dbReference type="PRO" id="PR:Q9LYK6"/>
<dbReference type="Proteomes" id="UP000006548">
    <property type="component" value="Chromosome 5"/>
</dbReference>
<dbReference type="ExpressionAtlas" id="Q9LYK6">
    <property type="expression patterns" value="baseline and differential"/>
</dbReference>
<dbReference type="GO" id="GO:0080008">
    <property type="term" value="C:Cul4-RING E3 ubiquitin ligase complex"/>
    <property type="evidence" value="ECO:0000250"/>
    <property type="project" value="TAIR"/>
</dbReference>
<dbReference type="GO" id="GO:0005634">
    <property type="term" value="C:nucleus"/>
    <property type="evidence" value="ECO:0000314"/>
    <property type="project" value="TAIR"/>
</dbReference>
<dbReference type="GO" id="GO:0009908">
    <property type="term" value="P:flower development"/>
    <property type="evidence" value="ECO:0007669"/>
    <property type="project" value="UniProtKB-KW"/>
</dbReference>
<dbReference type="GO" id="GO:0048586">
    <property type="term" value="P:regulation of long-day photoperiodism, flowering"/>
    <property type="evidence" value="ECO:0000315"/>
    <property type="project" value="UniProtKB"/>
</dbReference>
<dbReference type="GO" id="GO:0048510">
    <property type="term" value="P:regulation of timing of transition from vegetative to reproductive phase"/>
    <property type="evidence" value="ECO:0000315"/>
    <property type="project" value="TAIR"/>
</dbReference>
<dbReference type="FunFam" id="2.130.10.10:FF:000446">
    <property type="entry name" value="protein ANTHESIS POMOTING FACTOR 1 isoform X1"/>
    <property type="match status" value="1"/>
</dbReference>
<dbReference type="Gene3D" id="2.130.10.10">
    <property type="entry name" value="YVTN repeat-like/Quinoprotein amine dehydrogenase"/>
    <property type="match status" value="1"/>
</dbReference>
<dbReference type="InterPro" id="IPR020472">
    <property type="entry name" value="G-protein_beta_WD-40_rep"/>
</dbReference>
<dbReference type="InterPro" id="IPR037867">
    <property type="entry name" value="Swd2/WDR82"/>
</dbReference>
<dbReference type="InterPro" id="IPR015943">
    <property type="entry name" value="WD40/YVTN_repeat-like_dom_sf"/>
</dbReference>
<dbReference type="InterPro" id="IPR019775">
    <property type="entry name" value="WD40_repeat_CS"/>
</dbReference>
<dbReference type="InterPro" id="IPR036322">
    <property type="entry name" value="WD40_repeat_dom_sf"/>
</dbReference>
<dbReference type="InterPro" id="IPR001680">
    <property type="entry name" value="WD40_rpt"/>
</dbReference>
<dbReference type="PANTHER" id="PTHR19861:SF9">
    <property type="entry name" value="PROTEIN ANTHESIS POMOTING FACTOR 1"/>
    <property type="match status" value="1"/>
</dbReference>
<dbReference type="PANTHER" id="PTHR19861">
    <property type="entry name" value="WD40 REPEAT PROTEIN SWD2"/>
    <property type="match status" value="1"/>
</dbReference>
<dbReference type="Pfam" id="PF00400">
    <property type="entry name" value="WD40"/>
    <property type="match status" value="3"/>
</dbReference>
<dbReference type="PRINTS" id="PR00320">
    <property type="entry name" value="GPROTEINBRPT"/>
</dbReference>
<dbReference type="SMART" id="SM00320">
    <property type="entry name" value="WD40"/>
    <property type="match status" value="5"/>
</dbReference>
<dbReference type="SUPFAM" id="SSF50978">
    <property type="entry name" value="WD40 repeat-like"/>
    <property type="match status" value="1"/>
</dbReference>
<dbReference type="PROSITE" id="PS00678">
    <property type="entry name" value="WD_REPEATS_1"/>
    <property type="match status" value="1"/>
</dbReference>
<dbReference type="PROSITE" id="PS50082">
    <property type="entry name" value="WD_REPEATS_2"/>
    <property type="match status" value="3"/>
</dbReference>
<dbReference type="PROSITE" id="PS50294">
    <property type="entry name" value="WD_REPEATS_REGION"/>
    <property type="match status" value="1"/>
</dbReference>
<proteinExistence type="evidence at transcript level"/>
<accession>Q9LYK6</accession>
<keyword id="KW-0287">Flowering</keyword>
<keyword id="KW-0539">Nucleus</keyword>
<keyword id="KW-1185">Reference proteome</keyword>
<keyword id="KW-0677">Repeat</keyword>
<keyword id="KW-0853">WD repeat</keyword>
<comment type="function">
    <text evidence="1 3">Component of a chromatin regulatory complex involved in regulating chromatin structure in the nucleus (By similarity). Promotes flowering under long days (LD) via the regulation of bolting (PubMed:27968983).</text>
</comment>
<comment type="subcellular location">
    <subcellularLocation>
        <location evidence="3">Nucleus</location>
    </subcellularLocation>
</comment>
<comment type="tissue specificity">
    <text evidence="3">Expressed in the shoot apical meristem (SAM), embryos, seedlings, cotyledons, leaves primordia, young leaves and roots.</text>
</comment>
<comment type="developmental stage">
    <text evidence="3">During seed development, accumulates in the endosperm and in the developing embryo. Strongly expressed following germination throughout seedling growth, especially in aerial part. Present in cotyledons, including the vascular system, hydathodes and trichomes, as well as in young leaves and leaves primordia. In roots, mostly expressed 7 days after sowing. Localized in the central cylinder of roots and the lower hypocotyl area. Observed in the shoot apical meristem (SAM) and in the vascular system, particularly in the xylem parenchyma and phloem. During reproductive development, observed in flowers of stages 13-15, predominantly in the male reproductive tissues, mostly in the developing pollen grains, the anther tissues and the filaments, and, to a lower extent, in the vascular system of sepals and the gynoecium, and in petals. After fertilization, confined to the placenta and the abscission zone of the siliques.</text>
</comment>
<comment type="disruption phenotype">
    <text evidence="3">Altered shoot apical meristem (SAM) and increased growth rates, as well as prolonged vegetative phase and delayed bolting resulting in an impairment of flowering under long days (LD). Altered expression of FLC and SOC1.</text>
</comment>
<comment type="similarity">
    <text evidence="5">Belongs to the WD repeat SWD2 family.</text>
</comment>